<sequence>MSLTEEIKKRRTFAIISHPDAGKTTITEQLLYFGGEIREAGTVKGKKSGTFAKSDWMDIEKQRGISVTSSVMQFDYAGKRVNILDTPGHEDFSEDTYRTLMAVDAAVMVVDSAKGIEAQTKKLFEVVKHRNIPVFTFINKLDRDGREPLELLEELEEVLGIASYPMNWPIGMGRAFEGLYDLHNKRLELYKGDERFASIEDGDQLFTNNPFYEQVKEDIELLQEAGNDFSEQAILDGDLTPVFFGSALTNFGVQTFLDTFLEFAPEPHGHKTTEGNVVDPLAKDFSGFVFKIQANMDPKHRDRIAFVRIVSGEFERGMGVNLTRTGKGAKLSNVTQFMAESRENVTNAVAGDIIGVYDTGTYQVGDTLTVGKNKFEFEPLPTFTPEIFMKVSPKNVMKQKSFHKGIEQLVQEGAIQLYKNYQTGEYMLGAVGQLQFEVFKHRMEGEYNAEVVMTPMGKKTVRWISEDDLDQRMSSSRNILAKDRFDQPVFLFENDFALRWFADKYPDVTLEEKM</sequence>
<name>RF3_STRPG</name>
<feature type="chain" id="PRO_1000023689" description="Peptide chain release factor 3">
    <location>
        <begin position="1"/>
        <end position="514"/>
    </location>
</feature>
<feature type="domain" description="tr-type G">
    <location>
        <begin position="8"/>
        <end position="268"/>
    </location>
</feature>
<feature type="binding site" evidence="1">
    <location>
        <begin position="17"/>
        <end position="24"/>
    </location>
    <ligand>
        <name>GTP</name>
        <dbReference type="ChEBI" id="CHEBI:37565"/>
    </ligand>
</feature>
<feature type="binding site" evidence="1">
    <location>
        <begin position="85"/>
        <end position="89"/>
    </location>
    <ligand>
        <name>GTP</name>
        <dbReference type="ChEBI" id="CHEBI:37565"/>
    </ligand>
</feature>
<feature type="binding site" evidence="1">
    <location>
        <begin position="139"/>
        <end position="142"/>
    </location>
    <ligand>
        <name>GTP</name>
        <dbReference type="ChEBI" id="CHEBI:37565"/>
    </ligand>
</feature>
<protein>
    <recommendedName>
        <fullName evidence="1">Peptide chain release factor 3</fullName>
        <shortName evidence="1">RF-3</shortName>
    </recommendedName>
</protein>
<proteinExistence type="inferred from homology"/>
<comment type="function">
    <text evidence="1">Increases the formation of ribosomal termination complexes and stimulates activities of RF-1 and RF-2. It binds guanine nucleotides and has strong preference for UGA stop codons. It may interact directly with the ribosome. The stimulation of RF-1 and RF-2 is significantly reduced by GTP and GDP, but not by GMP.</text>
</comment>
<comment type="subcellular location">
    <subcellularLocation>
        <location evidence="1">Cytoplasm</location>
    </subcellularLocation>
</comment>
<comment type="similarity">
    <text evidence="1">Belongs to the TRAFAC class translation factor GTPase superfamily. Classic translation factor GTPase family. PrfC subfamily.</text>
</comment>
<reference key="1">
    <citation type="journal article" date="2007" name="J. Bacteriol.">
        <title>Complete genome of acute rheumatic fever-associated serotype M5 Streptococcus pyogenes strain Manfredo.</title>
        <authorList>
            <person name="Holden M.T.G."/>
            <person name="Scott A."/>
            <person name="Cherevach I."/>
            <person name="Chillingworth T."/>
            <person name="Churcher C."/>
            <person name="Cronin A."/>
            <person name="Dowd L."/>
            <person name="Feltwell T."/>
            <person name="Hamlin N."/>
            <person name="Holroyd S."/>
            <person name="Jagels K."/>
            <person name="Moule S."/>
            <person name="Mungall K."/>
            <person name="Quail M.A."/>
            <person name="Price C."/>
            <person name="Rabbinowitsch E."/>
            <person name="Sharp S."/>
            <person name="Skelton J."/>
            <person name="Whitehead S."/>
            <person name="Barrell B.G."/>
            <person name="Kehoe M."/>
            <person name="Parkhill J."/>
        </authorList>
    </citation>
    <scope>NUCLEOTIDE SEQUENCE [LARGE SCALE GENOMIC DNA]</scope>
    <source>
        <strain>Manfredo</strain>
    </source>
</reference>
<keyword id="KW-0963">Cytoplasm</keyword>
<keyword id="KW-0342">GTP-binding</keyword>
<keyword id="KW-0547">Nucleotide-binding</keyword>
<keyword id="KW-0648">Protein biosynthesis</keyword>
<gene>
    <name evidence="1" type="primary">prfC</name>
    <name type="ordered locus">SpyM50705</name>
</gene>
<evidence type="ECO:0000255" key="1">
    <source>
        <dbReference type="HAMAP-Rule" id="MF_00072"/>
    </source>
</evidence>
<accession>A2RDW3</accession>
<dbReference type="EMBL" id="AM295007">
    <property type="protein sequence ID" value="CAM30038.1"/>
    <property type="molecule type" value="Genomic_DNA"/>
</dbReference>
<dbReference type="RefSeq" id="WP_011888789.1">
    <property type="nucleotide sequence ID" value="NC_009332.1"/>
</dbReference>
<dbReference type="SMR" id="A2RDW3"/>
<dbReference type="KEGG" id="spf:SpyM50705"/>
<dbReference type="HOGENOM" id="CLU_002794_2_1_9"/>
<dbReference type="GO" id="GO:0005829">
    <property type="term" value="C:cytosol"/>
    <property type="evidence" value="ECO:0007669"/>
    <property type="project" value="TreeGrafter"/>
</dbReference>
<dbReference type="GO" id="GO:0005525">
    <property type="term" value="F:GTP binding"/>
    <property type="evidence" value="ECO:0007669"/>
    <property type="project" value="UniProtKB-UniRule"/>
</dbReference>
<dbReference type="GO" id="GO:0003924">
    <property type="term" value="F:GTPase activity"/>
    <property type="evidence" value="ECO:0007669"/>
    <property type="project" value="InterPro"/>
</dbReference>
<dbReference type="GO" id="GO:0016150">
    <property type="term" value="F:translation release factor activity, codon nonspecific"/>
    <property type="evidence" value="ECO:0007669"/>
    <property type="project" value="TreeGrafter"/>
</dbReference>
<dbReference type="GO" id="GO:0016149">
    <property type="term" value="F:translation release factor activity, codon specific"/>
    <property type="evidence" value="ECO:0007669"/>
    <property type="project" value="UniProtKB-UniRule"/>
</dbReference>
<dbReference type="GO" id="GO:0006449">
    <property type="term" value="P:regulation of translational termination"/>
    <property type="evidence" value="ECO:0007669"/>
    <property type="project" value="UniProtKB-UniRule"/>
</dbReference>
<dbReference type="CDD" id="cd04169">
    <property type="entry name" value="RF3"/>
    <property type="match status" value="1"/>
</dbReference>
<dbReference type="CDD" id="cd16259">
    <property type="entry name" value="RF3_III"/>
    <property type="match status" value="1"/>
</dbReference>
<dbReference type="FunFam" id="2.40.30.10:FF:000040">
    <property type="entry name" value="Peptide chain release factor 3"/>
    <property type="match status" value="1"/>
</dbReference>
<dbReference type="FunFam" id="3.30.70.3280:FF:000001">
    <property type="entry name" value="Peptide chain release factor 3"/>
    <property type="match status" value="1"/>
</dbReference>
<dbReference type="FunFam" id="3.40.50.300:FF:000542">
    <property type="entry name" value="Peptide chain release factor 3"/>
    <property type="match status" value="1"/>
</dbReference>
<dbReference type="Gene3D" id="3.40.50.300">
    <property type="entry name" value="P-loop containing nucleotide triphosphate hydrolases"/>
    <property type="match status" value="1"/>
</dbReference>
<dbReference type="Gene3D" id="3.30.70.3280">
    <property type="entry name" value="Peptide chain release factor 3, domain III"/>
    <property type="match status" value="1"/>
</dbReference>
<dbReference type="Gene3D" id="2.40.30.10">
    <property type="entry name" value="Translation factors"/>
    <property type="match status" value="1"/>
</dbReference>
<dbReference type="HAMAP" id="MF_00072">
    <property type="entry name" value="Rel_fac_3"/>
    <property type="match status" value="1"/>
</dbReference>
<dbReference type="InterPro" id="IPR053905">
    <property type="entry name" value="EF-G-like_DII"/>
</dbReference>
<dbReference type="InterPro" id="IPR035647">
    <property type="entry name" value="EFG_III/V"/>
</dbReference>
<dbReference type="InterPro" id="IPR031157">
    <property type="entry name" value="G_TR_CS"/>
</dbReference>
<dbReference type="InterPro" id="IPR027417">
    <property type="entry name" value="P-loop_NTPase"/>
</dbReference>
<dbReference type="InterPro" id="IPR004548">
    <property type="entry name" value="PrfC"/>
</dbReference>
<dbReference type="InterPro" id="IPR032090">
    <property type="entry name" value="RF3_C"/>
</dbReference>
<dbReference type="InterPro" id="IPR038467">
    <property type="entry name" value="RF3_dom_3_sf"/>
</dbReference>
<dbReference type="InterPro" id="IPR041732">
    <property type="entry name" value="RF3_GTP-bd"/>
</dbReference>
<dbReference type="InterPro" id="IPR005225">
    <property type="entry name" value="Small_GTP-bd"/>
</dbReference>
<dbReference type="InterPro" id="IPR000795">
    <property type="entry name" value="T_Tr_GTP-bd_dom"/>
</dbReference>
<dbReference type="InterPro" id="IPR009000">
    <property type="entry name" value="Transl_B-barrel_sf"/>
</dbReference>
<dbReference type="NCBIfam" id="TIGR00503">
    <property type="entry name" value="prfC"/>
    <property type="match status" value="1"/>
</dbReference>
<dbReference type="NCBIfam" id="NF001964">
    <property type="entry name" value="PRK00741.1"/>
    <property type="match status" value="1"/>
</dbReference>
<dbReference type="NCBIfam" id="TIGR00231">
    <property type="entry name" value="small_GTP"/>
    <property type="match status" value="1"/>
</dbReference>
<dbReference type="PANTHER" id="PTHR43556">
    <property type="entry name" value="PEPTIDE CHAIN RELEASE FACTOR RF3"/>
    <property type="match status" value="1"/>
</dbReference>
<dbReference type="PANTHER" id="PTHR43556:SF2">
    <property type="entry name" value="PEPTIDE CHAIN RELEASE FACTOR RF3"/>
    <property type="match status" value="1"/>
</dbReference>
<dbReference type="Pfam" id="PF22042">
    <property type="entry name" value="EF-G_D2"/>
    <property type="match status" value="1"/>
</dbReference>
<dbReference type="Pfam" id="PF00009">
    <property type="entry name" value="GTP_EFTU"/>
    <property type="match status" value="1"/>
</dbReference>
<dbReference type="Pfam" id="PF16658">
    <property type="entry name" value="RF3_C"/>
    <property type="match status" value="1"/>
</dbReference>
<dbReference type="PRINTS" id="PR00315">
    <property type="entry name" value="ELONGATNFCT"/>
</dbReference>
<dbReference type="PRINTS" id="PR01037">
    <property type="entry name" value="TCRTETOQM"/>
</dbReference>
<dbReference type="SUPFAM" id="SSF54980">
    <property type="entry name" value="EF-G C-terminal domain-like"/>
    <property type="match status" value="1"/>
</dbReference>
<dbReference type="SUPFAM" id="SSF52540">
    <property type="entry name" value="P-loop containing nucleoside triphosphate hydrolases"/>
    <property type="match status" value="1"/>
</dbReference>
<dbReference type="SUPFAM" id="SSF50447">
    <property type="entry name" value="Translation proteins"/>
    <property type="match status" value="1"/>
</dbReference>
<dbReference type="PROSITE" id="PS00301">
    <property type="entry name" value="G_TR_1"/>
    <property type="match status" value="1"/>
</dbReference>
<dbReference type="PROSITE" id="PS51722">
    <property type="entry name" value="G_TR_2"/>
    <property type="match status" value="1"/>
</dbReference>
<organism>
    <name type="scientific">Streptococcus pyogenes serotype M5 (strain Manfredo)</name>
    <dbReference type="NCBI Taxonomy" id="160491"/>
    <lineage>
        <taxon>Bacteria</taxon>
        <taxon>Bacillati</taxon>
        <taxon>Bacillota</taxon>
        <taxon>Bacilli</taxon>
        <taxon>Lactobacillales</taxon>
        <taxon>Streptococcaceae</taxon>
        <taxon>Streptococcus</taxon>
    </lineage>
</organism>